<organism>
    <name type="scientific">Streptococcus pyogenes serotype M12 (strain MGAS9429)</name>
    <dbReference type="NCBI Taxonomy" id="370551"/>
    <lineage>
        <taxon>Bacteria</taxon>
        <taxon>Bacillati</taxon>
        <taxon>Bacillota</taxon>
        <taxon>Bacilli</taxon>
        <taxon>Lactobacillales</taxon>
        <taxon>Streptococcaceae</taxon>
        <taxon>Streptococcus</taxon>
    </lineage>
</organism>
<comment type="function">
    <text evidence="1">Bidirectionally degrades single-stranded DNA into large acid-insoluble oligonucleotides, which are then degraded further into small acid-soluble oligonucleotides.</text>
</comment>
<comment type="catalytic activity">
    <reaction evidence="1">
        <text>Exonucleolytic cleavage in either 5'- to 3'- or 3'- to 5'-direction to yield nucleoside 5'-phosphates.</text>
        <dbReference type="EC" id="3.1.11.6"/>
    </reaction>
</comment>
<comment type="subunit">
    <text evidence="1">Heterooligomer composed of large and small subunits.</text>
</comment>
<comment type="subcellular location">
    <subcellularLocation>
        <location evidence="1">Cytoplasm</location>
    </subcellularLocation>
</comment>
<comment type="similarity">
    <text evidence="1">Belongs to the XseB family.</text>
</comment>
<sequence length="71" mass="7988">MSKTKTFEENLQDLETIVNKLENGDVPLEEAISEFQKGMLLSKELQKTLQAAEKTLVKVMQADGTEVDMDD</sequence>
<gene>
    <name evidence="1" type="primary">xseB</name>
    <name type="ordered locus">MGAS9429_Spy1226</name>
</gene>
<protein>
    <recommendedName>
        <fullName evidence="1">Exodeoxyribonuclease 7 small subunit</fullName>
        <ecNumber evidence="1">3.1.11.6</ecNumber>
    </recommendedName>
    <alternativeName>
        <fullName evidence="1">Exodeoxyribonuclease VII small subunit</fullName>
        <shortName evidence="1">Exonuclease VII small subunit</shortName>
    </alternativeName>
</protein>
<accession>Q1JL06</accession>
<proteinExistence type="inferred from homology"/>
<dbReference type="EC" id="3.1.11.6" evidence="1"/>
<dbReference type="EMBL" id="CP000259">
    <property type="protein sequence ID" value="ABF32413.1"/>
    <property type="molecule type" value="Genomic_DNA"/>
</dbReference>
<dbReference type="RefSeq" id="WP_002983901.1">
    <property type="nucleotide sequence ID" value="NC_008021.1"/>
</dbReference>
<dbReference type="SMR" id="Q1JL06"/>
<dbReference type="KEGG" id="spk:MGAS9429_Spy1226"/>
<dbReference type="HOGENOM" id="CLU_145918_3_2_9"/>
<dbReference type="Proteomes" id="UP000002433">
    <property type="component" value="Chromosome"/>
</dbReference>
<dbReference type="GO" id="GO:0005829">
    <property type="term" value="C:cytosol"/>
    <property type="evidence" value="ECO:0007669"/>
    <property type="project" value="TreeGrafter"/>
</dbReference>
<dbReference type="GO" id="GO:0009318">
    <property type="term" value="C:exodeoxyribonuclease VII complex"/>
    <property type="evidence" value="ECO:0007669"/>
    <property type="project" value="InterPro"/>
</dbReference>
<dbReference type="GO" id="GO:0008855">
    <property type="term" value="F:exodeoxyribonuclease VII activity"/>
    <property type="evidence" value="ECO:0007669"/>
    <property type="project" value="UniProtKB-UniRule"/>
</dbReference>
<dbReference type="GO" id="GO:0006308">
    <property type="term" value="P:DNA catabolic process"/>
    <property type="evidence" value="ECO:0007669"/>
    <property type="project" value="UniProtKB-UniRule"/>
</dbReference>
<dbReference type="Gene3D" id="1.10.287.1040">
    <property type="entry name" value="Exonuclease VII, small subunit"/>
    <property type="match status" value="1"/>
</dbReference>
<dbReference type="HAMAP" id="MF_00337">
    <property type="entry name" value="Exonuc_7_S"/>
    <property type="match status" value="1"/>
</dbReference>
<dbReference type="InterPro" id="IPR003761">
    <property type="entry name" value="Exonuc_VII_S"/>
</dbReference>
<dbReference type="InterPro" id="IPR037004">
    <property type="entry name" value="Exonuc_VII_ssu_sf"/>
</dbReference>
<dbReference type="NCBIfam" id="NF002138">
    <property type="entry name" value="PRK00977.1-2"/>
    <property type="match status" value="1"/>
</dbReference>
<dbReference type="NCBIfam" id="TIGR01280">
    <property type="entry name" value="xseB"/>
    <property type="match status" value="1"/>
</dbReference>
<dbReference type="PANTHER" id="PTHR34137">
    <property type="entry name" value="EXODEOXYRIBONUCLEASE 7 SMALL SUBUNIT"/>
    <property type="match status" value="1"/>
</dbReference>
<dbReference type="PANTHER" id="PTHR34137:SF1">
    <property type="entry name" value="EXODEOXYRIBONUCLEASE 7 SMALL SUBUNIT"/>
    <property type="match status" value="1"/>
</dbReference>
<dbReference type="Pfam" id="PF02609">
    <property type="entry name" value="Exonuc_VII_S"/>
    <property type="match status" value="1"/>
</dbReference>
<dbReference type="PIRSF" id="PIRSF006488">
    <property type="entry name" value="Exonuc_VII_S"/>
    <property type="match status" value="1"/>
</dbReference>
<dbReference type="SUPFAM" id="SSF116842">
    <property type="entry name" value="XseB-like"/>
    <property type="match status" value="1"/>
</dbReference>
<name>EX7S_STRPC</name>
<feature type="chain" id="PRO_0000303757" description="Exodeoxyribonuclease 7 small subunit">
    <location>
        <begin position="1"/>
        <end position="71"/>
    </location>
</feature>
<reference key="1">
    <citation type="journal article" date="2006" name="Proc. Natl. Acad. Sci. U.S.A.">
        <title>Molecular genetic anatomy of inter- and intraserotype variation in the human bacterial pathogen group A Streptococcus.</title>
        <authorList>
            <person name="Beres S.B."/>
            <person name="Richter E.W."/>
            <person name="Nagiec M.J."/>
            <person name="Sumby P."/>
            <person name="Porcella S.F."/>
            <person name="DeLeo F.R."/>
            <person name="Musser J.M."/>
        </authorList>
    </citation>
    <scope>NUCLEOTIDE SEQUENCE [LARGE SCALE GENOMIC DNA]</scope>
    <source>
        <strain>MGAS9429</strain>
    </source>
</reference>
<evidence type="ECO:0000255" key="1">
    <source>
        <dbReference type="HAMAP-Rule" id="MF_00337"/>
    </source>
</evidence>
<keyword id="KW-0963">Cytoplasm</keyword>
<keyword id="KW-0269">Exonuclease</keyword>
<keyword id="KW-0378">Hydrolase</keyword>
<keyword id="KW-0540">Nuclease</keyword>